<evidence type="ECO:0000250" key="1"/>
<evidence type="ECO:0000255" key="2"/>
<evidence type="ECO:0000305" key="3"/>
<accession>A6ZP58</accession>
<comment type="subcellular location">
    <subcellularLocation>
        <location evidence="1">Mitochondrion</location>
    </subcellularLocation>
</comment>
<comment type="similarity">
    <text evidence="3">Belongs to the AIM41 family.</text>
</comment>
<gene>
    <name type="primary">AIM41</name>
    <name type="ORF">SCY_5273</name>
</gene>
<protein>
    <recommendedName>
        <fullName>Altered inheritance of mitochondria protein 41, mitochondrial</fullName>
    </recommendedName>
</protein>
<reference key="1">
    <citation type="journal article" date="2007" name="Proc. Natl. Acad. Sci. U.S.A.">
        <title>Genome sequencing and comparative analysis of Saccharomyces cerevisiae strain YJM789.</title>
        <authorList>
            <person name="Wei W."/>
            <person name="McCusker J.H."/>
            <person name="Hyman R.W."/>
            <person name="Jones T."/>
            <person name="Ning Y."/>
            <person name="Cao Z."/>
            <person name="Gu Z."/>
            <person name="Bruno D."/>
            <person name="Miranda M."/>
            <person name="Nguyen M."/>
            <person name="Wilhelmy J."/>
            <person name="Komp C."/>
            <person name="Tamse R."/>
            <person name="Wang X."/>
            <person name="Jia P."/>
            <person name="Luedi P."/>
            <person name="Oefner P.J."/>
            <person name="David L."/>
            <person name="Dietrich F.S."/>
            <person name="Li Y."/>
            <person name="Davis R.W."/>
            <person name="Steinmetz L.M."/>
        </authorList>
    </citation>
    <scope>NUCLEOTIDE SEQUENCE [LARGE SCALE GENOMIC DNA]</scope>
    <source>
        <strain>YJM789</strain>
    </source>
</reference>
<proteinExistence type="inferred from homology"/>
<keyword id="KW-0496">Mitochondrion</keyword>
<keyword id="KW-0809">Transit peptide</keyword>
<dbReference type="EMBL" id="AAFW02000032">
    <property type="protein sequence ID" value="EDN63548.1"/>
    <property type="molecule type" value="Genomic_DNA"/>
</dbReference>
<dbReference type="SMR" id="A6ZP58"/>
<dbReference type="HOGENOM" id="CLU_123460_0_0_1"/>
<dbReference type="Proteomes" id="UP000007060">
    <property type="component" value="Unassembled WGS sequence"/>
</dbReference>
<dbReference type="GO" id="GO:0005739">
    <property type="term" value="C:mitochondrion"/>
    <property type="evidence" value="ECO:0007669"/>
    <property type="project" value="UniProtKB-SubCell"/>
</dbReference>
<dbReference type="GO" id="GO:0016884">
    <property type="term" value="F:carbon-nitrogen ligase activity, with glutamine as amido-N-donor"/>
    <property type="evidence" value="ECO:0007669"/>
    <property type="project" value="InterPro"/>
</dbReference>
<dbReference type="FunFam" id="1.10.1510.10:FF:000002">
    <property type="entry name" value="Altered inheritance of mitochondria protein 41, mitochondrial"/>
    <property type="match status" value="1"/>
</dbReference>
<dbReference type="Gene3D" id="1.10.1510.10">
    <property type="entry name" value="Uncharacterised protein YqeY/AIM41 PF09424, N-terminal domain"/>
    <property type="match status" value="1"/>
</dbReference>
<dbReference type="InterPro" id="IPR003789">
    <property type="entry name" value="Asn/Gln_tRNA_amidoTrase-B-like"/>
</dbReference>
<dbReference type="InterPro" id="IPR019004">
    <property type="entry name" value="YqeY/Aim41"/>
</dbReference>
<dbReference type="InterPro" id="IPR042184">
    <property type="entry name" value="YqeY/Aim41_N"/>
</dbReference>
<dbReference type="PANTHER" id="PTHR28055">
    <property type="entry name" value="ALTERED INHERITANCE OF MITOCHONDRIA PROTEIN 41, MITOCHONDRIAL"/>
    <property type="match status" value="1"/>
</dbReference>
<dbReference type="PANTHER" id="PTHR28055:SF1">
    <property type="entry name" value="ALTERED INHERITANCE OF MITOCHONDRIA PROTEIN 41, MITOCHONDRIAL"/>
    <property type="match status" value="1"/>
</dbReference>
<dbReference type="Pfam" id="PF09424">
    <property type="entry name" value="YqeY"/>
    <property type="match status" value="1"/>
</dbReference>
<dbReference type="SUPFAM" id="SSF89095">
    <property type="entry name" value="GatB/YqeY motif"/>
    <property type="match status" value="1"/>
</dbReference>
<organism>
    <name type="scientific">Saccharomyces cerevisiae (strain YJM789)</name>
    <name type="common">Baker's yeast</name>
    <dbReference type="NCBI Taxonomy" id="307796"/>
    <lineage>
        <taxon>Eukaryota</taxon>
        <taxon>Fungi</taxon>
        <taxon>Dikarya</taxon>
        <taxon>Ascomycota</taxon>
        <taxon>Saccharomycotina</taxon>
        <taxon>Saccharomycetes</taxon>
        <taxon>Saccharomycetales</taxon>
        <taxon>Saccharomycetaceae</taxon>
        <taxon>Saccharomyces</taxon>
    </lineage>
</organism>
<feature type="transit peptide" description="Mitochondrion" evidence="2">
    <location>
        <begin position="1"/>
        <end position="20"/>
    </location>
</feature>
<feature type="chain" id="PRO_0000399874" description="Altered inheritance of mitochondria protein 41, mitochondrial">
    <location>
        <begin position="21"/>
        <end position="185"/>
    </location>
</feature>
<name>AIM41_YEAS7</name>
<sequence>MFRQSIRPLVSNRLTFIRYNSSPAYTAAVSLLKGDLKKAMIAKDEMKKTAIRSMLSAIKNKEIALKGKSADEYSLYDMYSKLISQRKDSINEFLANKRDDLVAKEQGEMDIIKKYMDQLPVSSELDIDQNVKKLLDALKTKAGEKKVQIKEIMGEIDWKSLPTEWKTSPTAIKNSIVKQFKEIFK</sequence>